<feature type="chain" id="PRO_0000140607" description="Chorismate synthase">
    <location>
        <begin position="1"/>
        <end position="388"/>
    </location>
</feature>
<feature type="region of interest" description="Disordered" evidence="2">
    <location>
        <begin position="95"/>
        <end position="118"/>
    </location>
</feature>
<feature type="binding site" evidence="1">
    <location>
        <position position="39"/>
    </location>
    <ligand>
        <name>NADP(+)</name>
        <dbReference type="ChEBI" id="CHEBI:58349"/>
    </ligand>
</feature>
<feature type="binding site" evidence="1">
    <location>
        <position position="45"/>
    </location>
    <ligand>
        <name>NADP(+)</name>
        <dbReference type="ChEBI" id="CHEBI:58349"/>
    </ligand>
</feature>
<feature type="binding site" evidence="1">
    <location>
        <begin position="130"/>
        <end position="132"/>
    </location>
    <ligand>
        <name>FMN</name>
        <dbReference type="ChEBI" id="CHEBI:58210"/>
    </ligand>
</feature>
<feature type="binding site" evidence="1">
    <location>
        <begin position="251"/>
        <end position="252"/>
    </location>
    <ligand>
        <name>FMN</name>
        <dbReference type="ChEBI" id="CHEBI:58210"/>
    </ligand>
</feature>
<feature type="binding site" evidence="1">
    <location>
        <position position="296"/>
    </location>
    <ligand>
        <name>FMN</name>
        <dbReference type="ChEBI" id="CHEBI:58210"/>
    </ligand>
</feature>
<feature type="binding site" evidence="1">
    <location>
        <begin position="311"/>
        <end position="315"/>
    </location>
    <ligand>
        <name>FMN</name>
        <dbReference type="ChEBI" id="CHEBI:58210"/>
    </ligand>
</feature>
<feature type="binding site" evidence="1">
    <location>
        <position position="337"/>
    </location>
    <ligand>
        <name>FMN</name>
        <dbReference type="ChEBI" id="CHEBI:58210"/>
    </ligand>
</feature>
<name>AROC_LISMF</name>
<reference key="1">
    <citation type="journal article" date="2004" name="Nucleic Acids Res.">
        <title>Whole genome comparisons of serotype 4b and 1/2a strains of the food-borne pathogen Listeria monocytogenes reveal new insights into the core genome components of this species.</title>
        <authorList>
            <person name="Nelson K.E."/>
            <person name="Fouts D.E."/>
            <person name="Mongodin E.F."/>
            <person name="Ravel J."/>
            <person name="DeBoy R.T."/>
            <person name="Kolonay J.F."/>
            <person name="Rasko D.A."/>
            <person name="Angiuoli S.V."/>
            <person name="Gill S.R."/>
            <person name="Paulsen I.T."/>
            <person name="Peterson J.D."/>
            <person name="White O."/>
            <person name="Nelson W.C."/>
            <person name="Nierman W.C."/>
            <person name="Beanan M.J."/>
            <person name="Brinkac L.M."/>
            <person name="Daugherty S.C."/>
            <person name="Dodson R.J."/>
            <person name="Durkin A.S."/>
            <person name="Madupu R."/>
            <person name="Haft D.H."/>
            <person name="Selengut J."/>
            <person name="Van Aken S.E."/>
            <person name="Khouri H.M."/>
            <person name="Fedorova N."/>
            <person name="Forberger H.A."/>
            <person name="Tran B."/>
            <person name="Kathariou S."/>
            <person name="Wonderling L.D."/>
            <person name="Uhlich G.A."/>
            <person name="Bayles D.O."/>
            <person name="Luchansky J.B."/>
            <person name="Fraser C.M."/>
        </authorList>
    </citation>
    <scope>NUCLEOTIDE SEQUENCE [LARGE SCALE GENOMIC DNA]</scope>
    <source>
        <strain>F2365</strain>
    </source>
</reference>
<comment type="function">
    <text evidence="1">Catalyzes the anti-1,4-elimination of the C-3 phosphate and the C-6 proR hydrogen from 5-enolpyruvylshikimate-3-phosphate (EPSP) to yield chorismate, which is the branch point compound that serves as the starting substrate for the three terminal pathways of aromatic amino acid biosynthesis. This reaction introduces a second double bond into the aromatic ring system.</text>
</comment>
<comment type="catalytic activity">
    <reaction evidence="1">
        <text>5-O-(1-carboxyvinyl)-3-phosphoshikimate = chorismate + phosphate</text>
        <dbReference type="Rhea" id="RHEA:21020"/>
        <dbReference type="ChEBI" id="CHEBI:29748"/>
        <dbReference type="ChEBI" id="CHEBI:43474"/>
        <dbReference type="ChEBI" id="CHEBI:57701"/>
        <dbReference type="EC" id="4.2.3.5"/>
    </reaction>
</comment>
<comment type="cofactor">
    <cofactor evidence="1">
        <name>FMNH2</name>
        <dbReference type="ChEBI" id="CHEBI:57618"/>
    </cofactor>
    <text evidence="1">Reduced FMN (FMNH(2)).</text>
</comment>
<comment type="pathway">
    <text evidence="1">Metabolic intermediate biosynthesis; chorismate biosynthesis; chorismate from D-erythrose 4-phosphate and phosphoenolpyruvate: step 7/7.</text>
</comment>
<comment type="subunit">
    <text evidence="1">Homotetramer.</text>
</comment>
<comment type="similarity">
    <text evidence="1">Belongs to the chorismate synthase family.</text>
</comment>
<protein>
    <recommendedName>
        <fullName evidence="1">Chorismate synthase</fullName>
        <shortName evidence="1">CS</shortName>
        <ecNumber evidence="1">4.2.3.5</ecNumber>
    </recommendedName>
    <alternativeName>
        <fullName evidence="1">5-enolpyruvylshikimate-3-phosphate phospholyase</fullName>
    </alternativeName>
</protein>
<accession>Q71Y87</accession>
<proteinExistence type="inferred from homology"/>
<sequence>MRYLTAGESHGPGLTTIIEGLPAGMPLLAEDVNKELKRRQGGHGRGARMRIEKDQVQITAGIRHGKTLGAPVAMFVENKDWKHWETVMSIEPVPEKNEKSRRVSRPRPGHADLVGGMKYGHNDMRNVLERSSARETTVRVAAGAVAKKLLHELGIEVAGHVLEIGGTRANLTRDYAVSEIQETSEASPVRCLDGVAAEEMMQKIDDAKKNGDTIGGIVEVVVGGVPAGLGSYVQWDKKLDAKIARAIVSINAFKGAEFGVGFEAARKPGSEVMDEILWSKEDGYTRRTNNLGGFEGGMTNGMPIVVRGVMKPIPTLYKPLQSVDIDSKETFNASVERSDSCAVPAASVVAEAVVAWEVAVAVLEKFDGDRFDTLKKHVEEHRNLTKEF</sequence>
<evidence type="ECO:0000255" key="1">
    <source>
        <dbReference type="HAMAP-Rule" id="MF_00300"/>
    </source>
</evidence>
<evidence type="ECO:0000256" key="2">
    <source>
        <dbReference type="SAM" id="MobiDB-lite"/>
    </source>
</evidence>
<gene>
    <name evidence="1" type="primary">aroC</name>
    <name type="ordered locus">LMOf2365_1957</name>
</gene>
<keyword id="KW-0028">Amino-acid biosynthesis</keyword>
<keyword id="KW-0057">Aromatic amino acid biosynthesis</keyword>
<keyword id="KW-0274">FAD</keyword>
<keyword id="KW-0285">Flavoprotein</keyword>
<keyword id="KW-0288">FMN</keyword>
<keyword id="KW-0456">Lyase</keyword>
<keyword id="KW-0521">NADP</keyword>
<dbReference type="EC" id="4.2.3.5" evidence="1"/>
<dbReference type="EMBL" id="AE017262">
    <property type="protein sequence ID" value="AAT04727.1"/>
    <property type="molecule type" value="Genomic_DNA"/>
</dbReference>
<dbReference type="RefSeq" id="WP_003734418.1">
    <property type="nucleotide sequence ID" value="NC_002973.6"/>
</dbReference>
<dbReference type="SMR" id="Q71Y87"/>
<dbReference type="KEGG" id="lmf:LMOf2365_1957"/>
<dbReference type="HOGENOM" id="CLU_034547_2_0_9"/>
<dbReference type="BRENDA" id="4.2.3.5">
    <property type="organism ID" value="3045"/>
</dbReference>
<dbReference type="UniPathway" id="UPA00053">
    <property type="reaction ID" value="UER00090"/>
</dbReference>
<dbReference type="GO" id="GO:0005829">
    <property type="term" value="C:cytosol"/>
    <property type="evidence" value="ECO:0007669"/>
    <property type="project" value="TreeGrafter"/>
</dbReference>
<dbReference type="GO" id="GO:0004107">
    <property type="term" value="F:chorismate synthase activity"/>
    <property type="evidence" value="ECO:0007669"/>
    <property type="project" value="UniProtKB-UniRule"/>
</dbReference>
<dbReference type="GO" id="GO:0010181">
    <property type="term" value="F:FMN binding"/>
    <property type="evidence" value="ECO:0007669"/>
    <property type="project" value="TreeGrafter"/>
</dbReference>
<dbReference type="GO" id="GO:0008652">
    <property type="term" value="P:amino acid biosynthetic process"/>
    <property type="evidence" value="ECO:0007669"/>
    <property type="project" value="UniProtKB-KW"/>
</dbReference>
<dbReference type="GO" id="GO:0009073">
    <property type="term" value="P:aromatic amino acid family biosynthetic process"/>
    <property type="evidence" value="ECO:0007669"/>
    <property type="project" value="UniProtKB-KW"/>
</dbReference>
<dbReference type="GO" id="GO:0009423">
    <property type="term" value="P:chorismate biosynthetic process"/>
    <property type="evidence" value="ECO:0007669"/>
    <property type="project" value="UniProtKB-UniRule"/>
</dbReference>
<dbReference type="CDD" id="cd07304">
    <property type="entry name" value="Chorismate_synthase"/>
    <property type="match status" value="1"/>
</dbReference>
<dbReference type="FunFam" id="3.60.150.10:FF:000002">
    <property type="entry name" value="Chorismate synthase"/>
    <property type="match status" value="1"/>
</dbReference>
<dbReference type="Gene3D" id="3.60.150.10">
    <property type="entry name" value="Chorismate synthase AroC"/>
    <property type="match status" value="1"/>
</dbReference>
<dbReference type="HAMAP" id="MF_00300">
    <property type="entry name" value="Chorismate_synth"/>
    <property type="match status" value="1"/>
</dbReference>
<dbReference type="InterPro" id="IPR000453">
    <property type="entry name" value="Chorismate_synth"/>
</dbReference>
<dbReference type="InterPro" id="IPR035904">
    <property type="entry name" value="Chorismate_synth_AroC_sf"/>
</dbReference>
<dbReference type="InterPro" id="IPR020541">
    <property type="entry name" value="Chorismate_synthase_CS"/>
</dbReference>
<dbReference type="NCBIfam" id="TIGR00033">
    <property type="entry name" value="aroC"/>
    <property type="match status" value="1"/>
</dbReference>
<dbReference type="NCBIfam" id="NF003793">
    <property type="entry name" value="PRK05382.1"/>
    <property type="match status" value="1"/>
</dbReference>
<dbReference type="PANTHER" id="PTHR21085">
    <property type="entry name" value="CHORISMATE SYNTHASE"/>
    <property type="match status" value="1"/>
</dbReference>
<dbReference type="PANTHER" id="PTHR21085:SF0">
    <property type="entry name" value="CHORISMATE SYNTHASE"/>
    <property type="match status" value="1"/>
</dbReference>
<dbReference type="Pfam" id="PF01264">
    <property type="entry name" value="Chorismate_synt"/>
    <property type="match status" value="1"/>
</dbReference>
<dbReference type="PIRSF" id="PIRSF001456">
    <property type="entry name" value="Chorismate_synth"/>
    <property type="match status" value="1"/>
</dbReference>
<dbReference type="SUPFAM" id="SSF103263">
    <property type="entry name" value="Chorismate synthase, AroC"/>
    <property type="match status" value="1"/>
</dbReference>
<dbReference type="PROSITE" id="PS00787">
    <property type="entry name" value="CHORISMATE_SYNTHASE_1"/>
    <property type="match status" value="1"/>
</dbReference>
<dbReference type="PROSITE" id="PS00788">
    <property type="entry name" value="CHORISMATE_SYNTHASE_2"/>
    <property type="match status" value="1"/>
</dbReference>
<dbReference type="PROSITE" id="PS00789">
    <property type="entry name" value="CHORISMATE_SYNTHASE_3"/>
    <property type="match status" value="1"/>
</dbReference>
<organism>
    <name type="scientific">Listeria monocytogenes serotype 4b (strain F2365)</name>
    <dbReference type="NCBI Taxonomy" id="265669"/>
    <lineage>
        <taxon>Bacteria</taxon>
        <taxon>Bacillati</taxon>
        <taxon>Bacillota</taxon>
        <taxon>Bacilli</taxon>
        <taxon>Bacillales</taxon>
        <taxon>Listeriaceae</taxon>
        <taxon>Listeria</taxon>
    </lineage>
</organism>